<comment type="function">
    <text evidence="1">Catalyzes the conversion of dihydroorotate to orotate with quinone as electron acceptor.</text>
</comment>
<comment type="catalytic activity">
    <reaction>
        <text>(S)-dihydroorotate + a quinone = orotate + a quinol</text>
        <dbReference type="Rhea" id="RHEA:30187"/>
        <dbReference type="ChEBI" id="CHEBI:24646"/>
        <dbReference type="ChEBI" id="CHEBI:30839"/>
        <dbReference type="ChEBI" id="CHEBI:30864"/>
        <dbReference type="ChEBI" id="CHEBI:132124"/>
        <dbReference type="EC" id="1.3.5.2"/>
    </reaction>
</comment>
<comment type="cofactor">
    <cofactor evidence="1">
        <name>FMN</name>
        <dbReference type="ChEBI" id="CHEBI:58210"/>
    </cofactor>
    <text evidence="1">Binds 1 FMN per subunit.</text>
</comment>
<comment type="pathway">
    <text>Pyrimidine metabolism; UMP biosynthesis via de novo pathway; orotate from (S)-dihydroorotate (quinone route): step 1/1.</text>
</comment>
<comment type="subunit">
    <text evidence="1">Monomer.</text>
</comment>
<comment type="subcellular location">
    <subcellularLocation>
        <location evidence="1">Cell membrane</location>
        <topology evidence="1">Peripheral membrane protein</topology>
    </subcellularLocation>
</comment>
<comment type="similarity">
    <text evidence="2">Belongs to the dihydroorotate dehydrogenase family. Type 2 subfamily.</text>
</comment>
<accession>P0A7E2</accession>
<accession>P05021</accession>
<organism>
    <name type="scientific">Escherichia coli O157:H7</name>
    <dbReference type="NCBI Taxonomy" id="83334"/>
    <lineage>
        <taxon>Bacteria</taxon>
        <taxon>Pseudomonadati</taxon>
        <taxon>Pseudomonadota</taxon>
        <taxon>Gammaproteobacteria</taxon>
        <taxon>Enterobacterales</taxon>
        <taxon>Enterobacteriaceae</taxon>
        <taxon>Escherichia</taxon>
    </lineage>
</organism>
<dbReference type="EC" id="1.3.5.2"/>
<dbReference type="EMBL" id="AE005174">
    <property type="protein sequence ID" value="AAG55431.1"/>
    <property type="molecule type" value="Genomic_DNA"/>
</dbReference>
<dbReference type="EMBL" id="BA000007">
    <property type="protein sequence ID" value="BAB34452.1"/>
    <property type="molecule type" value="Genomic_DNA"/>
</dbReference>
<dbReference type="PIR" id="C85621">
    <property type="entry name" value="C85621"/>
</dbReference>
<dbReference type="PIR" id="E90757">
    <property type="entry name" value="E90757"/>
</dbReference>
<dbReference type="RefSeq" id="NP_309056.1">
    <property type="nucleotide sequence ID" value="NC_002695.1"/>
</dbReference>
<dbReference type="RefSeq" id="WP_001295352.1">
    <property type="nucleotide sequence ID" value="NZ_VOAI01000006.1"/>
</dbReference>
<dbReference type="SMR" id="P0A7E2"/>
<dbReference type="STRING" id="155864.Z1294"/>
<dbReference type="GeneID" id="917771"/>
<dbReference type="GeneID" id="93776469"/>
<dbReference type="KEGG" id="ece:Z1294"/>
<dbReference type="KEGG" id="ecs:ECs_1029"/>
<dbReference type="PATRIC" id="fig|386585.9.peg.1153"/>
<dbReference type="eggNOG" id="COG0167">
    <property type="taxonomic scope" value="Bacteria"/>
</dbReference>
<dbReference type="HOGENOM" id="CLU_013640_2_0_6"/>
<dbReference type="OMA" id="ERIKMGA"/>
<dbReference type="UniPathway" id="UPA00070">
    <property type="reaction ID" value="UER00946"/>
</dbReference>
<dbReference type="Proteomes" id="UP000000558">
    <property type="component" value="Chromosome"/>
</dbReference>
<dbReference type="Proteomes" id="UP000002519">
    <property type="component" value="Chromosome"/>
</dbReference>
<dbReference type="GO" id="GO:0005737">
    <property type="term" value="C:cytoplasm"/>
    <property type="evidence" value="ECO:0007669"/>
    <property type="project" value="InterPro"/>
</dbReference>
<dbReference type="GO" id="GO:0005886">
    <property type="term" value="C:plasma membrane"/>
    <property type="evidence" value="ECO:0007669"/>
    <property type="project" value="UniProtKB-SubCell"/>
</dbReference>
<dbReference type="GO" id="GO:0106430">
    <property type="term" value="F:dihydroorotate dehydrogenase (quinone) activity"/>
    <property type="evidence" value="ECO:0007669"/>
    <property type="project" value="UniProtKB-EC"/>
</dbReference>
<dbReference type="GO" id="GO:0006207">
    <property type="term" value="P:'de novo' pyrimidine nucleobase biosynthetic process"/>
    <property type="evidence" value="ECO:0007669"/>
    <property type="project" value="InterPro"/>
</dbReference>
<dbReference type="GO" id="GO:0044205">
    <property type="term" value="P:'de novo' UMP biosynthetic process"/>
    <property type="evidence" value="ECO:0007669"/>
    <property type="project" value="UniProtKB-UniRule"/>
</dbReference>
<dbReference type="CDD" id="cd04738">
    <property type="entry name" value="DHOD_2_like"/>
    <property type="match status" value="1"/>
</dbReference>
<dbReference type="FunFam" id="3.20.20.70:FF:000028">
    <property type="entry name" value="Dihydroorotate dehydrogenase (quinone)"/>
    <property type="match status" value="1"/>
</dbReference>
<dbReference type="Gene3D" id="3.20.20.70">
    <property type="entry name" value="Aldolase class I"/>
    <property type="match status" value="1"/>
</dbReference>
<dbReference type="HAMAP" id="MF_00225">
    <property type="entry name" value="DHO_dh_type2"/>
    <property type="match status" value="1"/>
</dbReference>
<dbReference type="InterPro" id="IPR013785">
    <property type="entry name" value="Aldolase_TIM"/>
</dbReference>
<dbReference type="InterPro" id="IPR050074">
    <property type="entry name" value="DHO_dehydrogenase"/>
</dbReference>
<dbReference type="InterPro" id="IPR012135">
    <property type="entry name" value="Dihydroorotate_DH_1_2"/>
</dbReference>
<dbReference type="InterPro" id="IPR005719">
    <property type="entry name" value="Dihydroorotate_DH_2"/>
</dbReference>
<dbReference type="InterPro" id="IPR005720">
    <property type="entry name" value="Dihydroorotate_DH_cat"/>
</dbReference>
<dbReference type="InterPro" id="IPR001295">
    <property type="entry name" value="Dihydroorotate_DH_CS"/>
</dbReference>
<dbReference type="NCBIfam" id="NF003644">
    <property type="entry name" value="PRK05286.1-1"/>
    <property type="match status" value="1"/>
</dbReference>
<dbReference type="NCBIfam" id="NF003645">
    <property type="entry name" value="PRK05286.1-2"/>
    <property type="match status" value="1"/>
</dbReference>
<dbReference type="NCBIfam" id="NF003646">
    <property type="entry name" value="PRK05286.1-4"/>
    <property type="match status" value="1"/>
</dbReference>
<dbReference type="NCBIfam" id="NF003652">
    <property type="entry name" value="PRK05286.2-5"/>
    <property type="match status" value="1"/>
</dbReference>
<dbReference type="NCBIfam" id="TIGR01036">
    <property type="entry name" value="pyrD_sub2"/>
    <property type="match status" value="1"/>
</dbReference>
<dbReference type="PANTHER" id="PTHR48109:SF4">
    <property type="entry name" value="DIHYDROOROTATE DEHYDROGENASE (QUINONE), MITOCHONDRIAL"/>
    <property type="match status" value="1"/>
</dbReference>
<dbReference type="PANTHER" id="PTHR48109">
    <property type="entry name" value="DIHYDROOROTATE DEHYDROGENASE (QUINONE), MITOCHONDRIAL-RELATED"/>
    <property type="match status" value="1"/>
</dbReference>
<dbReference type="Pfam" id="PF01180">
    <property type="entry name" value="DHO_dh"/>
    <property type="match status" value="1"/>
</dbReference>
<dbReference type="PIRSF" id="PIRSF000164">
    <property type="entry name" value="DHO_oxidase"/>
    <property type="match status" value="1"/>
</dbReference>
<dbReference type="SUPFAM" id="SSF51395">
    <property type="entry name" value="FMN-linked oxidoreductases"/>
    <property type="match status" value="1"/>
</dbReference>
<dbReference type="PROSITE" id="PS00911">
    <property type="entry name" value="DHODEHASE_1"/>
    <property type="match status" value="1"/>
</dbReference>
<dbReference type="PROSITE" id="PS00912">
    <property type="entry name" value="DHODEHASE_2"/>
    <property type="match status" value="1"/>
</dbReference>
<proteinExistence type="inferred from homology"/>
<evidence type="ECO:0000250" key="1"/>
<evidence type="ECO:0000305" key="2"/>
<keyword id="KW-1003">Cell membrane</keyword>
<keyword id="KW-0285">Flavoprotein</keyword>
<keyword id="KW-0288">FMN</keyword>
<keyword id="KW-0472">Membrane</keyword>
<keyword id="KW-0560">Oxidoreductase</keyword>
<keyword id="KW-0665">Pyrimidine biosynthesis</keyword>
<keyword id="KW-1185">Reference proteome</keyword>
<name>PYRD_ECO57</name>
<reference key="1">
    <citation type="journal article" date="2001" name="Nature">
        <title>Genome sequence of enterohaemorrhagic Escherichia coli O157:H7.</title>
        <authorList>
            <person name="Perna N.T."/>
            <person name="Plunkett G. III"/>
            <person name="Burland V."/>
            <person name="Mau B."/>
            <person name="Glasner J.D."/>
            <person name="Rose D.J."/>
            <person name="Mayhew G.F."/>
            <person name="Evans P.S."/>
            <person name="Gregor J."/>
            <person name="Kirkpatrick H.A."/>
            <person name="Posfai G."/>
            <person name="Hackett J."/>
            <person name="Klink S."/>
            <person name="Boutin A."/>
            <person name="Shao Y."/>
            <person name="Miller L."/>
            <person name="Grotbeck E.J."/>
            <person name="Davis N.W."/>
            <person name="Lim A."/>
            <person name="Dimalanta E.T."/>
            <person name="Potamousis K."/>
            <person name="Apodaca J."/>
            <person name="Anantharaman T.S."/>
            <person name="Lin J."/>
            <person name="Yen G."/>
            <person name="Schwartz D.C."/>
            <person name="Welch R.A."/>
            <person name="Blattner F.R."/>
        </authorList>
    </citation>
    <scope>NUCLEOTIDE SEQUENCE [LARGE SCALE GENOMIC DNA]</scope>
    <source>
        <strain>O157:H7 / EDL933 / ATCC 700927 / EHEC</strain>
    </source>
</reference>
<reference key="2">
    <citation type="journal article" date="2001" name="DNA Res.">
        <title>Complete genome sequence of enterohemorrhagic Escherichia coli O157:H7 and genomic comparison with a laboratory strain K-12.</title>
        <authorList>
            <person name="Hayashi T."/>
            <person name="Makino K."/>
            <person name="Ohnishi M."/>
            <person name="Kurokawa K."/>
            <person name="Ishii K."/>
            <person name="Yokoyama K."/>
            <person name="Han C.-G."/>
            <person name="Ohtsubo E."/>
            <person name="Nakayama K."/>
            <person name="Murata T."/>
            <person name="Tanaka M."/>
            <person name="Tobe T."/>
            <person name="Iida T."/>
            <person name="Takami H."/>
            <person name="Honda T."/>
            <person name="Sasakawa C."/>
            <person name="Ogasawara N."/>
            <person name="Yasunaga T."/>
            <person name="Kuhara S."/>
            <person name="Shiba T."/>
            <person name="Hattori M."/>
            <person name="Shinagawa H."/>
        </authorList>
    </citation>
    <scope>NUCLEOTIDE SEQUENCE [LARGE SCALE GENOMIC DNA]</scope>
    <source>
        <strain>O157:H7 / Sakai / RIMD 0509952 / EHEC</strain>
    </source>
</reference>
<feature type="chain" id="PRO_0000148438" description="Dihydroorotate dehydrogenase (quinone)">
    <location>
        <begin position="1"/>
        <end position="336"/>
    </location>
</feature>
<feature type="active site" description="Nucleophile" evidence="1">
    <location>
        <position position="175"/>
    </location>
</feature>
<feature type="binding site" evidence="1">
    <location>
        <begin position="62"/>
        <end position="66"/>
    </location>
    <ligand>
        <name>FMN</name>
        <dbReference type="ChEBI" id="CHEBI:58210"/>
    </ligand>
</feature>
<feature type="binding site" evidence="1">
    <location>
        <position position="66"/>
    </location>
    <ligand>
        <name>substrate</name>
    </ligand>
</feature>
<feature type="binding site" evidence="1">
    <location>
        <position position="86"/>
    </location>
    <ligand>
        <name>FMN</name>
        <dbReference type="ChEBI" id="CHEBI:58210"/>
    </ligand>
</feature>
<feature type="binding site" evidence="1">
    <location>
        <begin position="111"/>
        <end position="115"/>
    </location>
    <ligand>
        <name>substrate</name>
    </ligand>
</feature>
<feature type="binding site" evidence="1">
    <location>
        <position position="139"/>
    </location>
    <ligand>
        <name>FMN</name>
        <dbReference type="ChEBI" id="CHEBI:58210"/>
    </ligand>
</feature>
<feature type="binding site" evidence="1">
    <location>
        <position position="172"/>
    </location>
    <ligand>
        <name>FMN</name>
        <dbReference type="ChEBI" id="CHEBI:58210"/>
    </ligand>
</feature>
<feature type="binding site" evidence="1">
    <location>
        <position position="172"/>
    </location>
    <ligand>
        <name>substrate</name>
    </ligand>
</feature>
<feature type="binding site" evidence="1">
    <location>
        <position position="177"/>
    </location>
    <ligand>
        <name>substrate</name>
    </ligand>
</feature>
<feature type="binding site" evidence="1">
    <location>
        <position position="217"/>
    </location>
    <ligand>
        <name>FMN</name>
        <dbReference type="ChEBI" id="CHEBI:58210"/>
    </ligand>
</feature>
<feature type="binding site" evidence="1">
    <location>
        <position position="245"/>
    </location>
    <ligand>
        <name>FMN</name>
        <dbReference type="ChEBI" id="CHEBI:58210"/>
    </ligand>
</feature>
<feature type="binding site" evidence="1">
    <location>
        <begin position="246"/>
        <end position="247"/>
    </location>
    <ligand>
        <name>substrate</name>
    </ligand>
</feature>
<feature type="binding site" evidence="1">
    <location>
        <position position="268"/>
    </location>
    <ligand>
        <name>FMN</name>
        <dbReference type="ChEBI" id="CHEBI:58210"/>
    </ligand>
</feature>
<feature type="binding site" evidence="1">
    <location>
        <position position="297"/>
    </location>
    <ligand>
        <name>FMN</name>
        <dbReference type="ChEBI" id="CHEBI:58210"/>
    </ligand>
</feature>
<feature type="binding site" evidence="1">
    <location>
        <begin position="318"/>
        <end position="319"/>
    </location>
    <ligand>
        <name>FMN</name>
        <dbReference type="ChEBI" id="CHEBI:58210"/>
    </ligand>
</feature>
<sequence>MYYPFVRKALFQLDPERAHEFTFQQLRRITGTPFEALVRQKVPAKPVNCMGLTFKNPLGLAAGLDKDGECIDALGAMGFGSIEIGTVTPRPQPGNDKPRLFRLVDAEGLINRMGFNNLGVDNLVENVKKAHYDGVLGINIGKNKDTPVEQGKDDYLICMEKIYAYAGYIAINISSPNTPGLRTLQYGEALDDLLTAIKNKQNDLQAMHHKYVPIAVKIAPDLSEEELIQVADSLVRHNIDGVIATNTTLDRSLVQGMKNCDQTGGLSGRPLQLKSTEIIRRLSLELNGRLPIIGVGGIDSVIAAREKIAAGASLVQIYSGFIFKGPPLIKEIVTHI</sequence>
<protein>
    <recommendedName>
        <fullName>Dihydroorotate dehydrogenase (quinone)</fullName>
        <ecNumber>1.3.5.2</ecNumber>
    </recommendedName>
    <alternativeName>
        <fullName>DHOdehase</fullName>
        <shortName>DHOD</shortName>
        <shortName>DHODase</shortName>
    </alternativeName>
    <alternativeName>
        <fullName>Dihydroorotate oxidase</fullName>
    </alternativeName>
</protein>
<gene>
    <name type="primary">pyrD</name>
    <name type="ordered locus">Z1294</name>
    <name type="ordered locus">ECs1029</name>
</gene>